<name>PLSY_SYNSC</name>
<evidence type="ECO:0000255" key="1">
    <source>
        <dbReference type="HAMAP-Rule" id="MF_01043"/>
    </source>
</evidence>
<organism>
    <name type="scientific">Synechococcus sp. (strain CC9605)</name>
    <dbReference type="NCBI Taxonomy" id="110662"/>
    <lineage>
        <taxon>Bacteria</taxon>
        <taxon>Bacillati</taxon>
        <taxon>Cyanobacteriota</taxon>
        <taxon>Cyanophyceae</taxon>
        <taxon>Synechococcales</taxon>
        <taxon>Synechococcaceae</taxon>
        <taxon>Synechococcus</taxon>
    </lineage>
</organism>
<accession>Q3AHU3</accession>
<reference key="1">
    <citation type="submission" date="2005-07" db="EMBL/GenBank/DDBJ databases">
        <title>Complete sequence of Synechococcus sp. CC9605.</title>
        <authorList>
            <consortium name="US DOE Joint Genome Institute"/>
            <person name="Copeland A."/>
            <person name="Lucas S."/>
            <person name="Lapidus A."/>
            <person name="Barry K."/>
            <person name="Detter J.C."/>
            <person name="Glavina T."/>
            <person name="Hammon N."/>
            <person name="Israni S."/>
            <person name="Pitluck S."/>
            <person name="Schmutz J."/>
            <person name="Martinez M."/>
            <person name="Larimer F."/>
            <person name="Land M."/>
            <person name="Kyrpides N."/>
            <person name="Ivanova N."/>
            <person name="Richardson P."/>
        </authorList>
    </citation>
    <scope>NUCLEOTIDE SEQUENCE [LARGE SCALE GENOMIC DNA]</scope>
    <source>
        <strain>CC9605</strain>
    </source>
</reference>
<comment type="function">
    <text evidence="1">Catalyzes the transfer of an acyl group from acyl-phosphate (acyl-PO(4)) to glycerol-3-phosphate (G3P) to form lysophosphatidic acid (LPA). This enzyme utilizes acyl-phosphate as fatty acyl donor, but not acyl-CoA or acyl-ACP.</text>
</comment>
<comment type="catalytic activity">
    <reaction evidence="1">
        <text>an acyl phosphate + sn-glycerol 3-phosphate = a 1-acyl-sn-glycero-3-phosphate + phosphate</text>
        <dbReference type="Rhea" id="RHEA:34075"/>
        <dbReference type="ChEBI" id="CHEBI:43474"/>
        <dbReference type="ChEBI" id="CHEBI:57597"/>
        <dbReference type="ChEBI" id="CHEBI:57970"/>
        <dbReference type="ChEBI" id="CHEBI:59918"/>
        <dbReference type="EC" id="2.3.1.275"/>
    </reaction>
</comment>
<comment type="pathway">
    <text evidence="1">Lipid metabolism; phospholipid metabolism.</text>
</comment>
<comment type="subunit">
    <text evidence="1">Probably interacts with PlsX.</text>
</comment>
<comment type="subcellular location">
    <subcellularLocation>
        <location evidence="1">Cell inner membrane</location>
        <topology evidence="1">Multi-pass membrane protein</topology>
    </subcellularLocation>
</comment>
<comment type="similarity">
    <text evidence="1">Belongs to the PlsY family.</text>
</comment>
<keyword id="KW-0997">Cell inner membrane</keyword>
<keyword id="KW-1003">Cell membrane</keyword>
<keyword id="KW-0444">Lipid biosynthesis</keyword>
<keyword id="KW-0443">Lipid metabolism</keyword>
<keyword id="KW-0472">Membrane</keyword>
<keyword id="KW-0594">Phospholipid biosynthesis</keyword>
<keyword id="KW-1208">Phospholipid metabolism</keyword>
<keyword id="KW-0808">Transferase</keyword>
<keyword id="KW-0812">Transmembrane</keyword>
<keyword id="KW-1133">Transmembrane helix</keyword>
<sequence length="203" mass="20989">MIQTAFTALLLLAIGYLLGAIPSGYLAGRWLKGIDLRDCGSGSTGATNVLRNVGKGPALVVFLIDVGKGALAVLLAKSVGLNDWLQVLTGLAALAGHIWPVWLGWKGGKAVATGLGIFLGLAWPVGLACFGLFMAVISIFRIVSLSSVVAAIGLPLLMLLSGSSSAYVVVSLVASLMVLWRHRSNIERLLAGTEPKIGAKAKG</sequence>
<feature type="chain" id="PRO_0000250339" description="Glycerol-3-phosphate acyltransferase">
    <location>
        <begin position="1"/>
        <end position="203"/>
    </location>
</feature>
<feature type="transmembrane region" description="Helical" evidence="1">
    <location>
        <begin position="1"/>
        <end position="21"/>
    </location>
</feature>
<feature type="transmembrane region" description="Helical" evidence="1">
    <location>
        <begin position="84"/>
        <end position="104"/>
    </location>
</feature>
<feature type="transmembrane region" description="Helical" evidence="1">
    <location>
        <begin position="117"/>
        <end position="137"/>
    </location>
</feature>
<feature type="transmembrane region" description="Helical" evidence="1">
    <location>
        <begin position="157"/>
        <end position="179"/>
    </location>
</feature>
<protein>
    <recommendedName>
        <fullName evidence="1">Glycerol-3-phosphate acyltransferase</fullName>
    </recommendedName>
    <alternativeName>
        <fullName evidence="1">Acyl-PO4 G3P acyltransferase</fullName>
    </alternativeName>
    <alternativeName>
        <fullName evidence="1">Acyl-phosphate--glycerol-3-phosphate acyltransferase</fullName>
    </alternativeName>
    <alternativeName>
        <fullName evidence="1">G3P acyltransferase</fullName>
        <shortName evidence="1">GPAT</shortName>
        <ecNumber evidence="1">2.3.1.275</ecNumber>
    </alternativeName>
    <alternativeName>
        <fullName evidence="1">Lysophosphatidic acid synthase</fullName>
        <shortName evidence="1">LPA synthase</shortName>
    </alternativeName>
</protein>
<gene>
    <name evidence="1" type="primary">plsY</name>
    <name type="ordered locus">Syncc9605_2099</name>
</gene>
<proteinExistence type="inferred from homology"/>
<dbReference type="EC" id="2.3.1.275" evidence="1"/>
<dbReference type="EMBL" id="CP000110">
    <property type="protein sequence ID" value="ABB35839.1"/>
    <property type="molecule type" value="Genomic_DNA"/>
</dbReference>
<dbReference type="RefSeq" id="WP_011365047.1">
    <property type="nucleotide sequence ID" value="NC_007516.1"/>
</dbReference>
<dbReference type="SMR" id="Q3AHU3"/>
<dbReference type="STRING" id="110662.Syncc9605_2099"/>
<dbReference type="KEGG" id="syd:Syncc9605_2099"/>
<dbReference type="eggNOG" id="COG0344">
    <property type="taxonomic scope" value="Bacteria"/>
</dbReference>
<dbReference type="HOGENOM" id="CLU_081254_7_1_3"/>
<dbReference type="OrthoDB" id="9777124at2"/>
<dbReference type="UniPathway" id="UPA00085"/>
<dbReference type="GO" id="GO:0005886">
    <property type="term" value="C:plasma membrane"/>
    <property type="evidence" value="ECO:0007669"/>
    <property type="project" value="UniProtKB-SubCell"/>
</dbReference>
<dbReference type="GO" id="GO:0043772">
    <property type="term" value="F:acyl-phosphate glycerol-3-phosphate acyltransferase activity"/>
    <property type="evidence" value="ECO:0007669"/>
    <property type="project" value="UniProtKB-UniRule"/>
</dbReference>
<dbReference type="GO" id="GO:0008654">
    <property type="term" value="P:phospholipid biosynthetic process"/>
    <property type="evidence" value="ECO:0007669"/>
    <property type="project" value="UniProtKB-UniRule"/>
</dbReference>
<dbReference type="HAMAP" id="MF_01043">
    <property type="entry name" value="PlsY"/>
    <property type="match status" value="1"/>
</dbReference>
<dbReference type="InterPro" id="IPR003811">
    <property type="entry name" value="G3P_acylTferase_PlsY"/>
</dbReference>
<dbReference type="NCBIfam" id="TIGR00023">
    <property type="entry name" value="glycerol-3-phosphate 1-O-acyltransferase PlsY"/>
    <property type="match status" value="1"/>
</dbReference>
<dbReference type="PANTHER" id="PTHR30309:SF0">
    <property type="entry name" value="GLYCEROL-3-PHOSPHATE ACYLTRANSFERASE-RELATED"/>
    <property type="match status" value="1"/>
</dbReference>
<dbReference type="PANTHER" id="PTHR30309">
    <property type="entry name" value="INNER MEMBRANE PROTEIN YGIH"/>
    <property type="match status" value="1"/>
</dbReference>
<dbReference type="Pfam" id="PF02660">
    <property type="entry name" value="G3P_acyltransf"/>
    <property type="match status" value="1"/>
</dbReference>
<dbReference type="SMART" id="SM01207">
    <property type="entry name" value="G3P_acyltransf"/>
    <property type="match status" value="1"/>
</dbReference>